<reference key="1">
    <citation type="journal article" date="2006" name="Mol. Genet. Genomics">
        <title>Distinctive architecture of the chloroplast genome in the chlorophycean green alga Stigeoclonium helveticum.</title>
        <authorList>
            <person name="Belanger A.-S."/>
            <person name="Brouard J.-S."/>
            <person name="Charlebois P."/>
            <person name="Otis C."/>
            <person name="Lemieux C."/>
            <person name="Turmel M."/>
        </authorList>
    </citation>
    <scope>NUCLEOTIDE SEQUENCE [LARGE SCALE GENOMIC DNA]</scope>
    <source>
        <strain>UTEX 441</strain>
    </source>
</reference>
<keyword id="KW-0150">Chloroplast</keyword>
<keyword id="KW-0934">Plastid</keyword>
<keyword id="KW-0687">Ribonucleoprotein</keyword>
<keyword id="KW-0689">Ribosomal protein</keyword>
<keyword id="KW-0694">RNA-binding</keyword>
<keyword id="KW-0699">rRNA-binding</keyword>
<comment type="function">
    <text evidence="1">With S4 and S5 plays an important role in translational accuracy. Located at the interface of the 30S and 50S subunits (By similarity).</text>
</comment>
<comment type="subunit">
    <text evidence="1">Part of the 30S ribosomal subunit.</text>
</comment>
<comment type="subcellular location">
    <subcellularLocation>
        <location>Plastid</location>
        <location>Chloroplast</location>
    </subcellularLocation>
</comment>
<comment type="similarity">
    <text evidence="2">Belongs to the universal ribosomal protein uS12 family.</text>
</comment>
<organism>
    <name type="scientific">Stigeoclonium helveticum</name>
    <name type="common">Green alga</name>
    <dbReference type="NCBI Taxonomy" id="55999"/>
    <lineage>
        <taxon>Eukaryota</taxon>
        <taxon>Viridiplantae</taxon>
        <taxon>Chlorophyta</taxon>
        <taxon>core chlorophytes</taxon>
        <taxon>Chlorophyceae</taxon>
        <taxon>OCC clade</taxon>
        <taxon>Chaetophorales</taxon>
        <taxon>Chaetophoraceae</taxon>
        <taxon>Stigeoclonium</taxon>
    </lineage>
</organism>
<accession>Q06SG4</accession>
<gene>
    <name type="primary">rps12</name>
</gene>
<name>RR12_STIHE</name>
<dbReference type="EMBL" id="DQ630521">
    <property type="protein sequence ID" value="ABF60192.1"/>
    <property type="molecule type" value="Genomic_DNA"/>
</dbReference>
<dbReference type="RefSeq" id="YP_764402.1">
    <property type="nucleotide sequence ID" value="NC_008372.1"/>
</dbReference>
<dbReference type="SMR" id="Q06SG4"/>
<dbReference type="GeneID" id="4308372"/>
<dbReference type="GO" id="GO:0009507">
    <property type="term" value="C:chloroplast"/>
    <property type="evidence" value="ECO:0007669"/>
    <property type="project" value="UniProtKB-SubCell"/>
</dbReference>
<dbReference type="GO" id="GO:0015935">
    <property type="term" value="C:small ribosomal subunit"/>
    <property type="evidence" value="ECO:0007669"/>
    <property type="project" value="InterPro"/>
</dbReference>
<dbReference type="GO" id="GO:0019843">
    <property type="term" value="F:rRNA binding"/>
    <property type="evidence" value="ECO:0007669"/>
    <property type="project" value="UniProtKB-UniRule"/>
</dbReference>
<dbReference type="GO" id="GO:0003735">
    <property type="term" value="F:structural constituent of ribosome"/>
    <property type="evidence" value="ECO:0007669"/>
    <property type="project" value="InterPro"/>
</dbReference>
<dbReference type="GO" id="GO:0006412">
    <property type="term" value="P:translation"/>
    <property type="evidence" value="ECO:0007669"/>
    <property type="project" value="UniProtKB-UniRule"/>
</dbReference>
<dbReference type="CDD" id="cd03368">
    <property type="entry name" value="Ribosomal_S12"/>
    <property type="match status" value="1"/>
</dbReference>
<dbReference type="FunFam" id="2.40.50.140:FF:000001">
    <property type="entry name" value="30S ribosomal protein S12"/>
    <property type="match status" value="1"/>
</dbReference>
<dbReference type="Gene3D" id="2.40.50.140">
    <property type="entry name" value="Nucleic acid-binding proteins"/>
    <property type="match status" value="1"/>
</dbReference>
<dbReference type="HAMAP" id="MF_00403_B">
    <property type="entry name" value="Ribosomal_uS12_B"/>
    <property type="match status" value="1"/>
</dbReference>
<dbReference type="InterPro" id="IPR012340">
    <property type="entry name" value="NA-bd_OB-fold"/>
</dbReference>
<dbReference type="InterPro" id="IPR006032">
    <property type="entry name" value="Ribosomal_uS12"/>
</dbReference>
<dbReference type="InterPro" id="IPR005679">
    <property type="entry name" value="Ribosomal_uS12_bac"/>
</dbReference>
<dbReference type="NCBIfam" id="TIGR00981">
    <property type="entry name" value="rpsL_bact"/>
    <property type="match status" value="1"/>
</dbReference>
<dbReference type="PANTHER" id="PTHR11652">
    <property type="entry name" value="30S RIBOSOMAL PROTEIN S12 FAMILY MEMBER"/>
    <property type="match status" value="1"/>
</dbReference>
<dbReference type="Pfam" id="PF00164">
    <property type="entry name" value="Ribosom_S12_S23"/>
    <property type="match status" value="1"/>
</dbReference>
<dbReference type="PIRSF" id="PIRSF002133">
    <property type="entry name" value="Ribosomal_S12/S23"/>
    <property type="match status" value="1"/>
</dbReference>
<dbReference type="PRINTS" id="PR01034">
    <property type="entry name" value="RIBOSOMALS12"/>
</dbReference>
<dbReference type="SUPFAM" id="SSF50249">
    <property type="entry name" value="Nucleic acid-binding proteins"/>
    <property type="match status" value="1"/>
</dbReference>
<dbReference type="PROSITE" id="PS00055">
    <property type="entry name" value="RIBOSOMAL_S12"/>
    <property type="match status" value="1"/>
</dbReference>
<sequence length="131" mass="14254">MPTIQQLVKSARQKLVNKTKAPALKSCPQRRGICLRVYTVTPKKPNSALRKVARVRLSSGFEVTAYIPGIGHNLQEHAVVLVRGGRVKDLPGVRYHIVRGTLDTAGVKGRVQGRSKYGVKKVSAKSAGKSK</sequence>
<geneLocation type="chloroplast"/>
<protein>
    <recommendedName>
        <fullName evidence="2">Small ribosomal subunit protein uS12c</fullName>
    </recommendedName>
    <alternativeName>
        <fullName>30S ribosomal protein S12, chloroplastic</fullName>
    </alternativeName>
</protein>
<feature type="chain" id="PRO_0000276634" description="Small ribosomal subunit protein uS12c">
    <location>
        <begin position="1"/>
        <end position="131"/>
    </location>
</feature>
<proteinExistence type="inferred from homology"/>
<evidence type="ECO:0000250" key="1"/>
<evidence type="ECO:0000305" key="2"/>